<sequence>MTFSVERVRADFPVLNREVNGQPLAYLDSAASAQKPEAVIGAEAEFYRHGYAAVHRGIHTLSAEATARMEAVRQQAANFLNAGSAEEVVFVRGTTEGINLVANSWGNANVGAGDNIIISEMEHHANIVPWQMLCARVGAELRVIPLNPDGTLQLDVVPGLFDPRTRLLAITEVSNVLGTENPLAALIALAHQHGAKVLVDGAQAVMHHPVDVQALGCDFYVFSGHKLYGPTGIGVLYGRSELLQAMAPWEGGGSMIATVSLTEGTTWNRAPWRFEAGTPNTGGIIGLGAALTYVSQLGLTQIAEYEQTLMRYALEALRAVPDLILYGPAQRKGVIAFNLGQHHAYDVGSFLDNYGIAVRTGHHCAMPLMARYQVPAMCRASLAMYNTTEEVDRLVAGLQRIHKLLG</sequence>
<keyword id="KW-0963">Cytoplasm</keyword>
<keyword id="KW-0456">Lyase</keyword>
<keyword id="KW-0663">Pyridoxal phosphate</keyword>
<keyword id="KW-0808">Transferase</keyword>
<protein>
    <recommendedName>
        <fullName evidence="1">Cysteine desulfurase</fullName>
        <ecNumber evidence="1">2.8.1.7</ecNumber>
    </recommendedName>
    <alternativeName>
        <fullName evidence="1">Selenocysteine beta-lyase</fullName>
        <shortName evidence="1">SCL</shortName>
    </alternativeName>
    <alternativeName>
        <fullName evidence="1">Selenocysteine lyase</fullName>
        <ecNumber evidence="1">4.4.1.16</ecNumber>
    </alternativeName>
    <alternativeName>
        <fullName evidence="1">Selenocysteine reductase</fullName>
    </alternativeName>
</protein>
<name>SUFS_KLEP3</name>
<feature type="chain" id="PRO_1000188303" description="Cysteine desulfurase">
    <location>
        <begin position="1"/>
        <end position="406"/>
    </location>
</feature>
<feature type="active site" description="Cysteine persulfide intermediate" evidence="1">
    <location>
        <position position="364"/>
    </location>
</feature>
<feature type="modified residue" description="N6-(pyridoxal phosphate)lysine" evidence="1">
    <location>
        <position position="226"/>
    </location>
</feature>
<reference key="1">
    <citation type="journal article" date="2008" name="PLoS Genet.">
        <title>Complete genome sequence of the N2-fixing broad host range endophyte Klebsiella pneumoniae 342 and virulence predictions verified in mice.</title>
        <authorList>
            <person name="Fouts D.E."/>
            <person name="Tyler H.L."/>
            <person name="DeBoy R.T."/>
            <person name="Daugherty S."/>
            <person name="Ren Q."/>
            <person name="Badger J.H."/>
            <person name="Durkin A.S."/>
            <person name="Huot H."/>
            <person name="Shrivastava S."/>
            <person name="Kothari S."/>
            <person name="Dodson R.J."/>
            <person name="Mohamoud Y."/>
            <person name="Khouri H."/>
            <person name="Roesch L.F.W."/>
            <person name="Krogfelt K.A."/>
            <person name="Struve C."/>
            <person name="Triplett E.W."/>
            <person name="Methe B.A."/>
        </authorList>
    </citation>
    <scope>NUCLEOTIDE SEQUENCE [LARGE SCALE GENOMIC DNA]</scope>
    <source>
        <strain>342</strain>
    </source>
</reference>
<gene>
    <name evidence="1" type="primary">sufS</name>
    <name type="ordered locus">KPK_2184</name>
</gene>
<proteinExistence type="inferred from homology"/>
<comment type="function">
    <text evidence="1">Cysteine desulfurases mobilize the sulfur from L-cysteine to yield L-alanine, an essential step in sulfur metabolism for biosynthesis of a variety of sulfur-containing biomolecules. Component of the suf operon, which is activated and required under specific conditions such as oxidative stress and iron limitation. Acts as a potent selenocysteine lyase in vitro, that mobilizes selenium from L-selenocysteine. Selenocysteine lyase activity is however unsure in vivo.</text>
</comment>
<comment type="catalytic activity">
    <reaction evidence="1">
        <text>(sulfur carrier)-H + L-cysteine = (sulfur carrier)-SH + L-alanine</text>
        <dbReference type="Rhea" id="RHEA:43892"/>
        <dbReference type="Rhea" id="RHEA-COMP:14737"/>
        <dbReference type="Rhea" id="RHEA-COMP:14739"/>
        <dbReference type="ChEBI" id="CHEBI:29917"/>
        <dbReference type="ChEBI" id="CHEBI:35235"/>
        <dbReference type="ChEBI" id="CHEBI:57972"/>
        <dbReference type="ChEBI" id="CHEBI:64428"/>
        <dbReference type="EC" id="2.8.1.7"/>
    </reaction>
</comment>
<comment type="catalytic activity">
    <reaction evidence="1">
        <text>L-selenocysteine + AH2 = hydrogenselenide + L-alanine + A + H(+)</text>
        <dbReference type="Rhea" id="RHEA:11632"/>
        <dbReference type="ChEBI" id="CHEBI:13193"/>
        <dbReference type="ChEBI" id="CHEBI:15378"/>
        <dbReference type="ChEBI" id="CHEBI:17499"/>
        <dbReference type="ChEBI" id="CHEBI:29317"/>
        <dbReference type="ChEBI" id="CHEBI:57843"/>
        <dbReference type="ChEBI" id="CHEBI:57972"/>
        <dbReference type="EC" id="4.4.1.16"/>
    </reaction>
</comment>
<comment type="cofactor">
    <cofactor evidence="1">
        <name>pyridoxal 5'-phosphate</name>
        <dbReference type="ChEBI" id="CHEBI:597326"/>
    </cofactor>
</comment>
<comment type="pathway">
    <text evidence="1">Cofactor biosynthesis; iron-sulfur cluster biosynthesis.</text>
</comment>
<comment type="subunit">
    <text evidence="1">Homodimer. Interacts with SufE and the SufBCD complex composed of SufB, SufC and SufD. The interaction with SufE is required to mediate the direct transfer of the sulfur atom from the S-sulfanylcysteine.</text>
</comment>
<comment type="subcellular location">
    <subcellularLocation>
        <location evidence="1">Cytoplasm</location>
    </subcellularLocation>
</comment>
<comment type="similarity">
    <text evidence="1">Belongs to the class-V pyridoxal-phosphate-dependent aminotransferase family. Csd subfamily.</text>
</comment>
<evidence type="ECO:0000255" key="1">
    <source>
        <dbReference type="HAMAP-Rule" id="MF_01831"/>
    </source>
</evidence>
<dbReference type="EC" id="2.8.1.7" evidence="1"/>
<dbReference type="EC" id="4.4.1.16" evidence="1"/>
<dbReference type="EMBL" id="CP000964">
    <property type="protein sequence ID" value="ACI07792.1"/>
    <property type="molecule type" value="Genomic_DNA"/>
</dbReference>
<dbReference type="SMR" id="B5XQH2"/>
<dbReference type="KEGG" id="kpe:KPK_2184"/>
<dbReference type="HOGENOM" id="CLU_003433_2_5_6"/>
<dbReference type="UniPathway" id="UPA00266"/>
<dbReference type="Proteomes" id="UP000001734">
    <property type="component" value="Chromosome"/>
</dbReference>
<dbReference type="GO" id="GO:0005737">
    <property type="term" value="C:cytoplasm"/>
    <property type="evidence" value="ECO:0007669"/>
    <property type="project" value="UniProtKB-SubCell"/>
</dbReference>
<dbReference type="GO" id="GO:0031071">
    <property type="term" value="F:cysteine desulfurase activity"/>
    <property type="evidence" value="ECO:0007669"/>
    <property type="project" value="UniProtKB-UniRule"/>
</dbReference>
<dbReference type="GO" id="GO:0030170">
    <property type="term" value="F:pyridoxal phosphate binding"/>
    <property type="evidence" value="ECO:0007669"/>
    <property type="project" value="InterPro"/>
</dbReference>
<dbReference type="GO" id="GO:0009000">
    <property type="term" value="F:selenocysteine lyase activity"/>
    <property type="evidence" value="ECO:0007669"/>
    <property type="project" value="UniProtKB-UniRule"/>
</dbReference>
<dbReference type="GO" id="GO:0006534">
    <property type="term" value="P:cysteine metabolic process"/>
    <property type="evidence" value="ECO:0007669"/>
    <property type="project" value="InterPro"/>
</dbReference>
<dbReference type="CDD" id="cd06453">
    <property type="entry name" value="SufS_like"/>
    <property type="match status" value="1"/>
</dbReference>
<dbReference type="FunFam" id="3.40.640.10:FF:000042">
    <property type="entry name" value="Cysteine desulfurase"/>
    <property type="match status" value="1"/>
</dbReference>
<dbReference type="Gene3D" id="3.90.1150.10">
    <property type="entry name" value="Aspartate Aminotransferase, domain 1"/>
    <property type="match status" value="1"/>
</dbReference>
<dbReference type="Gene3D" id="3.40.640.10">
    <property type="entry name" value="Type I PLP-dependent aspartate aminotransferase-like (Major domain)"/>
    <property type="match status" value="1"/>
</dbReference>
<dbReference type="HAMAP" id="MF_01831">
    <property type="entry name" value="SufS_aminotrans_5"/>
    <property type="match status" value="1"/>
</dbReference>
<dbReference type="InterPro" id="IPR000192">
    <property type="entry name" value="Aminotrans_V_dom"/>
</dbReference>
<dbReference type="InterPro" id="IPR020578">
    <property type="entry name" value="Aminotrans_V_PyrdxlP_BS"/>
</dbReference>
<dbReference type="InterPro" id="IPR010970">
    <property type="entry name" value="Cys_dSase_SufS"/>
</dbReference>
<dbReference type="InterPro" id="IPR015424">
    <property type="entry name" value="PyrdxlP-dep_Trfase"/>
</dbReference>
<dbReference type="InterPro" id="IPR015421">
    <property type="entry name" value="PyrdxlP-dep_Trfase_major"/>
</dbReference>
<dbReference type="InterPro" id="IPR015422">
    <property type="entry name" value="PyrdxlP-dep_Trfase_small"/>
</dbReference>
<dbReference type="NCBIfam" id="NF006791">
    <property type="entry name" value="PRK09295.1"/>
    <property type="match status" value="1"/>
</dbReference>
<dbReference type="NCBIfam" id="TIGR01979">
    <property type="entry name" value="sufS"/>
    <property type="match status" value="1"/>
</dbReference>
<dbReference type="PANTHER" id="PTHR43586">
    <property type="entry name" value="CYSTEINE DESULFURASE"/>
    <property type="match status" value="1"/>
</dbReference>
<dbReference type="PANTHER" id="PTHR43586:SF25">
    <property type="entry name" value="CYSTEINE DESULFURASE"/>
    <property type="match status" value="1"/>
</dbReference>
<dbReference type="Pfam" id="PF00266">
    <property type="entry name" value="Aminotran_5"/>
    <property type="match status" value="1"/>
</dbReference>
<dbReference type="SUPFAM" id="SSF53383">
    <property type="entry name" value="PLP-dependent transferases"/>
    <property type="match status" value="1"/>
</dbReference>
<dbReference type="PROSITE" id="PS00595">
    <property type="entry name" value="AA_TRANSFER_CLASS_5"/>
    <property type="match status" value="1"/>
</dbReference>
<organism>
    <name type="scientific">Klebsiella pneumoniae (strain 342)</name>
    <dbReference type="NCBI Taxonomy" id="507522"/>
    <lineage>
        <taxon>Bacteria</taxon>
        <taxon>Pseudomonadati</taxon>
        <taxon>Pseudomonadota</taxon>
        <taxon>Gammaproteobacteria</taxon>
        <taxon>Enterobacterales</taxon>
        <taxon>Enterobacteriaceae</taxon>
        <taxon>Klebsiella/Raoultella group</taxon>
        <taxon>Klebsiella</taxon>
        <taxon>Klebsiella pneumoniae complex</taxon>
    </lineage>
</organism>
<accession>B5XQH2</accession>